<organism>
    <name type="scientific">Desulfovibrio desulfuricans (strain ATCC 27774 / DSM 6949 / MB)</name>
    <dbReference type="NCBI Taxonomy" id="525146"/>
    <lineage>
        <taxon>Bacteria</taxon>
        <taxon>Pseudomonadati</taxon>
        <taxon>Thermodesulfobacteriota</taxon>
        <taxon>Desulfovibrionia</taxon>
        <taxon>Desulfovibrionales</taxon>
        <taxon>Desulfovibrionaceae</taxon>
        <taxon>Desulfovibrio</taxon>
    </lineage>
</organism>
<proteinExistence type="inferred from homology"/>
<name>RL30_DESDA</name>
<accession>B8IYK9</accession>
<gene>
    <name evidence="1" type="primary">rpmD</name>
    <name type="ordered locus">Ddes_0678</name>
</gene>
<comment type="subunit">
    <text evidence="1">Part of the 50S ribosomal subunit.</text>
</comment>
<comment type="similarity">
    <text evidence="1">Belongs to the universal ribosomal protein uL30 family.</text>
</comment>
<evidence type="ECO:0000255" key="1">
    <source>
        <dbReference type="HAMAP-Rule" id="MF_01371"/>
    </source>
</evidence>
<evidence type="ECO:0000305" key="2"/>
<reference key="1">
    <citation type="submission" date="2009-01" db="EMBL/GenBank/DDBJ databases">
        <title>Complete sequence of Desulfovibrio desulfuricans subsp. desulfuricans str. ATCC 27774.</title>
        <authorList>
            <consortium name="US DOE Joint Genome Institute"/>
            <person name="Lucas S."/>
            <person name="Copeland A."/>
            <person name="Lapidus A."/>
            <person name="Glavina del Rio T."/>
            <person name="Tice H."/>
            <person name="Bruce D."/>
            <person name="Goodwin L."/>
            <person name="Pitluck S."/>
            <person name="Sims D."/>
            <person name="Lu M."/>
            <person name="Kiss H."/>
            <person name="Meineke L."/>
            <person name="Brettin T."/>
            <person name="Detter J.C."/>
            <person name="Han C."/>
            <person name="Larimer F."/>
            <person name="Land M."/>
            <person name="Hauser L."/>
            <person name="Kyrpides N."/>
            <person name="Ovchinnikova G."/>
            <person name="Hazen T.C."/>
        </authorList>
    </citation>
    <scope>NUCLEOTIDE SEQUENCE [LARGE SCALE GENOMIC DNA]</scope>
    <source>
        <strain>ATCC 27774 / DSM 6949 / MB</strain>
    </source>
</reference>
<protein>
    <recommendedName>
        <fullName evidence="1">Large ribosomal subunit protein uL30</fullName>
    </recommendedName>
    <alternativeName>
        <fullName evidence="2">50S ribosomal protein L30</fullName>
    </alternativeName>
</protein>
<dbReference type="EMBL" id="CP001358">
    <property type="protein sequence ID" value="ACL48586.1"/>
    <property type="molecule type" value="Genomic_DNA"/>
</dbReference>
<dbReference type="SMR" id="B8IYK9"/>
<dbReference type="STRING" id="525146.Ddes_0678"/>
<dbReference type="KEGG" id="dds:Ddes_0678"/>
<dbReference type="eggNOG" id="COG1841">
    <property type="taxonomic scope" value="Bacteria"/>
</dbReference>
<dbReference type="HOGENOM" id="CLU_131047_1_3_7"/>
<dbReference type="GO" id="GO:0015934">
    <property type="term" value="C:large ribosomal subunit"/>
    <property type="evidence" value="ECO:0007669"/>
    <property type="project" value="InterPro"/>
</dbReference>
<dbReference type="GO" id="GO:0003735">
    <property type="term" value="F:structural constituent of ribosome"/>
    <property type="evidence" value="ECO:0007669"/>
    <property type="project" value="InterPro"/>
</dbReference>
<dbReference type="GO" id="GO:0006412">
    <property type="term" value="P:translation"/>
    <property type="evidence" value="ECO:0007669"/>
    <property type="project" value="InterPro"/>
</dbReference>
<dbReference type="CDD" id="cd01658">
    <property type="entry name" value="Ribosomal_L30"/>
    <property type="match status" value="1"/>
</dbReference>
<dbReference type="Gene3D" id="3.30.1390.20">
    <property type="entry name" value="Ribosomal protein L30, ferredoxin-like fold domain"/>
    <property type="match status" value="1"/>
</dbReference>
<dbReference type="HAMAP" id="MF_01371_B">
    <property type="entry name" value="Ribosomal_uL30_B"/>
    <property type="match status" value="1"/>
</dbReference>
<dbReference type="InterPro" id="IPR036919">
    <property type="entry name" value="Ribo_uL30_ferredoxin-like_sf"/>
</dbReference>
<dbReference type="InterPro" id="IPR005996">
    <property type="entry name" value="Ribosomal_uL30_bac-type"/>
</dbReference>
<dbReference type="InterPro" id="IPR016082">
    <property type="entry name" value="Ribosomal_uL30_ferredoxin-like"/>
</dbReference>
<dbReference type="NCBIfam" id="TIGR01308">
    <property type="entry name" value="rpmD_bact"/>
    <property type="match status" value="1"/>
</dbReference>
<dbReference type="Pfam" id="PF00327">
    <property type="entry name" value="Ribosomal_L30"/>
    <property type="match status" value="1"/>
</dbReference>
<dbReference type="PIRSF" id="PIRSF002211">
    <property type="entry name" value="Ribosomal_L30_bac-type"/>
    <property type="match status" value="1"/>
</dbReference>
<dbReference type="SUPFAM" id="SSF55129">
    <property type="entry name" value="Ribosomal protein L30p/L7e"/>
    <property type="match status" value="1"/>
</dbReference>
<keyword id="KW-0687">Ribonucleoprotein</keyword>
<keyword id="KW-0689">Ribosomal protein</keyword>
<feature type="chain" id="PRO_1000215057" description="Large ribosomal subunit protein uL30">
    <location>
        <begin position="1"/>
        <end position="58"/>
    </location>
</feature>
<sequence length="58" mass="6454">MAEIKVKLVRSRIGASPAQRKLLDSLGLKRREMVKTFKDTPAIRGIIAKVPHMVAVVE</sequence>